<sequence>MADLSKYRNIGIFAHVDAGKTTTTERILKLTGQIHKSGDTHDGTSVTDFMDQESERGITIQSAAVSCFWKDHRFNVIDTPGHVDFTVEVYRSLKVLDGGIGVFCGSGGVEPQSETNWRYANESGVARVIFVNKLDRMGADFFRVTNQVQKVLGATPLIMTLPIGREDEFVGVVDVLTKQAYVWDATGLPENYTIEDVPADMVDQVEEYHELLIETAVEQDDELLETYMEGVIPSIEDVKRCIRKGTRDLAFFPTYCGSAYKNKGMQLILDAVVDYLPSPTEVDPQPLMDEEGNENGEFAIVSTDLPFKALAFKIMDDRFGALTFVRIYSGKLNKGDTILNAFTGKTERVGRMVEMQADDRNELASAQAGDIIAIVGMKNVQTGHTLCDPKHPVTLEPMVFPTPVISIAVQPKDKGGNEKMGVAIGKMVAEDPSFQVETDEDSGETILKGMGELHLDIKVDILKRTYGVDLIVGQPQVAYRETITKEIEDSYTHKKQSGGSGQFGKIDYRIKPGEVASGFTFKSSVVGGNVPKEFWPAVEKGFKSMMGTGVLAGFPVLDVEVELFDGGFHAVDSSAIAFEIAAKGAFRQSIPKAGAQLLEPIMKVDVFTPEDHVGDVIGDLNRRRGMMKDQEPGLTGVRIKVDVPLSEMFGYIGSLRTMTSGRGQFSMEFSHYAPCPNNVAEAVIAAEKEKKAAK</sequence>
<name>EFG2_PSET1</name>
<protein>
    <recommendedName>
        <fullName evidence="1">Elongation factor G 2</fullName>
        <shortName evidence="1">EF-G 2</shortName>
    </recommendedName>
</protein>
<organism>
    <name type="scientific">Pseudoalteromonas translucida (strain TAC 125)</name>
    <dbReference type="NCBI Taxonomy" id="326442"/>
    <lineage>
        <taxon>Bacteria</taxon>
        <taxon>Pseudomonadati</taxon>
        <taxon>Pseudomonadota</taxon>
        <taxon>Gammaproteobacteria</taxon>
        <taxon>Alteromonadales</taxon>
        <taxon>Pseudoalteromonadaceae</taxon>
        <taxon>Pseudoalteromonas</taxon>
    </lineage>
</organism>
<comment type="function">
    <text evidence="1">Catalyzes the GTP-dependent ribosomal translocation step during translation elongation. During this step, the ribosome changes from the pre-translocational (PRE) to the post-translocational (POST) state as the newly formed A-site-bound peptidyl-tRNA and P-site-bound deacylated tRNA move to the P and E sites, respectively. Catalyzes the coordinated movement of the two tRNA molecules, the mRNA and conformational changes in the ribosome.</text>
</comment>
<comment type="subcellular location">
    <subcellularLocation>
        <location evidence="1">Cytoplasm</location>
    </subcellularLocation>
</comment>
<comment type="similarity">
    <text evidence="1">Belongs to the TRAFAC class translation factor GTPase superfamily. Classic translation factor GTPase family. EF-G/EF-2 subfamily.</text>
</comment>
<reference key="1">
    <citation type="journal article" date="2005" name="Genome Res.">
        <title>Coping with cold: the genome of the versatile marine Antarctica bacterium Pseudoalteromonas haloplanktis TAC125.</title>
        <authorList>
            <person name="Medigue C."/>
            <person name="Krin E."/>
            <person name="Pascal G."/>
            <person name="Barbe V."/>
            <person name="Bernsel A."/>
            <person name="Bertin P.N."/>
            <person name="Cheung F."/>
            <person name="Cruveiller S."/>
            <person name="D'Amico S."/>
            <person name="Duilio A."/>
            <person name="Fang G."/>
            <person name="Feller G."/>
            <person name="Ho C."/>
            <person name="Mangenot S."/>
            <person name="Marino G."/>
            <person name="Nilsson J."/>
            <person name="Parrilli E."/>
            <person name="Rocha E.P.C."/>
            <person name="Rouy Z."/>
            <person name="Sekowska A."/>
            <person name="Tutino M.L."/>
            <person name="Vallenet D."/>
            <person name="von Heijne G."/>
            <person name="Danchin A."/>
        </authorList>
    </citation>
    <scope>NUCLEOTIDE SEQUENCE [LARGE SCALE GENOMIC DNA]</scope>
    <source>
        <strain>TAC 125</strain>
    </source>
</reference>
<gene>
    <name evidence="1" type="primary">fusA2</name>
    <name type="ordered locus">PSHAa2940</name>
</gene>
<dbReference type="EMBL" id="CR954246">
    <property type="protein sequence ID" value="CAI87975.1"/>
    <property type="molecule type" value="Genomic_DNA"/>
</dbReference>
<dbReference type="SMR" id="Q3IJW9"/>
<dbReference type="STRING" id="326442.PSHAa2940"/>
<dbReference type="KEGG" id="pha:PSHAa2940"/>
<dbReference type="PATRIC" id="fig|326442.8.peg.2837"/>
<dbReference type="eggNOG" id="COG0480">
    <property type="taxonomic scope" value="Bacteria"/>
</dbReference>
<dbReference type="HOGENOM" id="CLU_002794_4_1_6"/>
<dbReference type="BioCyc" id="PHAL326442:PSHA_RS14440-MONOMER"/>
<dbReference type="Proteomes" id="UP000006843">
    <property type="component" value="Chromosome I"/>
</dbReference>
<dbReference type="GO" id="GO:0005737">
    <property type="term" value="C:cytoplasm"/>
    <property type="evidence" value="ECO:0007669"/>
    <property type="project" value="UniProtKB-SubCell"/>
</dbReference>
<dbReference type="GO" id="GO:0005525">
    <property type="term" value="F:GTP binding"/>
    <property type="evidence" value="ECO:0007669"/>
    <property type="project" value="UniProtKB-UniRule"/>
</dbReference>
<dbReference type="GO" id="GO:0003924">
    <property type="term" value="F:GTPase activity"/>
    <property type="evidence" value="ECO:0007669"/>
    <property type="project" value="InterPro"/>
</dbReference>
<dbReference type="GO" id="GO:0097216">
    <property type="term" value="F:guanosine tetraphosphate binding"/>
    <property type="evidence" value="ECO:0007669"/>
    <property type="project" value="UniProtKB-ARBA"/>
</dbReference>
<dbReference type="GO" id="GO:0003746">
    <property type="term" value="F:translation elongation factor activity"/>
    <property type="evidence" value="ECO:0007669"/>
    <property type="project" value="UniProtKB-UniRule"/>
</dbReference>
<dbReference type="GO" id="GO:0032790">
    <property type="term" value="P:ribosome disassembly"/>
    <property type="evidence" value="ECO:0007669"/>
    <property type="project" value="TreeGrafter"/>
</dbReference>
<dbReference type="CDD" id="cd01886">
    <property type="entry name" value="EF-G"/>
    <property type="match status" value="1"/>
</dbReference>
<dbReference type="CDD" id="cd16262">
    <property type="entry name" value="EFG_III"/>
    <property type="match status" value="1"/>
</dbReference>
<dbReference type="CDD" id="cd01434">
    <property type="entry name" value="EFG_mtEFG1_IV"/>
    <property type="match status" value="1"/>
</dbReference>
<dbReference type="CDD" id="cd03713">
    <property type="entry name" value="EFG_mtEFG_C"/>
    <property type="match status" value="1"/>
</dbReference>
<dbReference type="CDD" id="cd04088">
    <property type="entry name" value="EFG_mtEFG_II"/>
    <property type="match status" value="1"/>
</dbReference>
<dbReference type="FunFam" id="2.40.30.10:FF:000006">
    <property type="entry name" value="Elongation factor G"/>
    <property type="match status" value="1"/>
</dbReference>
<dbReference type="FunFam" id="3.30.230.10:FF:000003">
    <property type="entry name" value="Elongation factor G"/>
    <property type="match status" value="1"/>
</dbReference>
<dbReference type="FunFam" id="3.30.70.240:FF:000001">
    <property type="entry name" value="Elongation factor G"/>
    <property type="match status" value="1"/>
</dbReference>
<dbReference type="FunFam" id="3.30.70.870:FF:000006">
    <property type="entry name" value="Elongation factor G"/>
    <property type="match status" value="1"/>
</dbReference>
<dbReference type="FunFam" id="3.40.50.300:FF:000029">
    <property type="entry name" value="Elongation factor G"/>
    <property type="match status" value="1"/>
</dbReference>
<dbReference type="Gene3D" id="3.30.230.10">
    <property type="match status" value="1"/>
</dbReference>
<dbReference type="Gene3D" id="3.30.70.240">
    <property type="match status" value="1"/>
</dbReference>
<dbReference type="Gene3D" id="3.30.70.870">
    <property type="entry name" value="Elongation Factor G (Translational Gtpase), domain 3"/>
    <property type="match status" value="1"/>
</dbReference>
<dbReference type="Gene3D" id="3.40.50.300">
    <property type="entry name" value="P-loop containing nucleotide triphosphate hydrolases"/>
    <property type="match status" value="1"/>
</dbReference>
<dbReference type="Gene3D" id="2.40.30.10">
    <property type="entry name" value="Translation factors"/>
    <property type="match status" value="1"/>
</dbReference>
<dbReference type="HAMAP" id="MF_00054_B">
    <property type="entry name" value="EF_G_EF_2_B"/>
    <property type="match status" value="1"/>
</dbReference>
<dbReference type="InterPro" id="IPR041095">
    <property type="entry name" value="EFG_II"/>
</dbReference>
<dbReference type="InterPro" id="IPR009022">
    <property type="entry name" value="EFG_III"/>
</dbReference>
<dbReference type="InterPro" id="IPR035647">
    <property type="entry name" value="EFG_III/V"/>
</dbReference>
<dbReference type="InterPro" id="IPR047872">
    <property type="entry name" value="EFG_IV"/>
</dbReference>
<dbReference type="InterPro" id="IPR035649">
    <property type="entry name" value="EFG_V"/>
</dbReference>
<dbReference type="InterPro" id="IPR000640">
    <property type="entry name" value="EFG_V-like"/>
</dbReference>
<dbReference type="InterPro" id="IPR004161">
    <property type="entry name" value="EFTu-like_2"/>
</dbReference>
<dbReference type="InterPro" id="IPR027417">
    <property type="entry name" value="P-loop_NTPase"/>
</dbReference>
<dbReference type="InterPro" id="IPR020568">
    <property type="entry name" value="Ribosomal_Su5_D2-typ_SF"/>
</dbReference>
<dbReference type="InterPro" id="IPR014721">
    <property type="entry name" value="Ribsml_uS5_D2-typ_fold_subgr"/>
</dbReference>
<dbReference type="InterPro" id="IPR005225">
    <property type="entry name" value="Small_GTP-bd"/>
</dbReference>
<dbReference type="InterPro" id="IPR000795">
    <property type="entry name" value="T_Tr_GTP-bd_dom"/>
</dbReference>
<dbReference type="InterPro" id="IPR009000">
    <property type="entry name" value="Transl_B-barrel_sf"/>
</dbReference>
<dbReference type="InterPro" id="IPR004540">
    <property type="entry name" value="Transl_elong_EFG/EF2"/>
</dbReference>
<dbReference type="InterPro" id="IPR005517">
    <property type="entry name" value="Transl_elong_EFG/EF2_IV"/>
</dbReference>
<dbReference type="NCBIfam" id="TIGR00484">
    <property type="entry name" value="EF-G"/>
    <property type="match status" value="1"/>
</dbReference>
<dbReference type="NCBIfam" id="NF009381">
    <property type="entry name" value="PRK12740.1-5"/>
    <property type="match status" value="1"/>
</dbReference>
<dbReference type="NCBIfam" id="TIGR00231">
    <property type="entry name" value="small_GTP"/>
    <property type="match status" value="1"/>
</dbReference>
<dbReference type="PANTHER" id="PTHR43261:SF5">
    <property type="entry name" value="ELONGATION FACTOR G 1"/>
    <property type="match status" value="1"/>
</dbReference>
<dbReference type="PANTHER" id="PTHR43261">
    <property type="entry name" value="TRANSLATION ELONGATION FACTOR G-RELATED"/>
    <property type="match status" value="1"/>
</dbReference>
<dbReference type="Pfam" id="PF00679">
    <property type="entry name" value="EFG_C"/>
    <property type="match status" value="1"/>
</dbReference>
<dbReference type="Pfam" id="PF14492">
    <property type="entry name" value="EFG_III"/>
    <property type="match status" value="1"/>
</dbReference>
<dbReference type="Pfam" id="PF03764">
    <property type="entry name" value="EFG_IV"/>
    <property type="match status" value="1"/>
</dbReference>
<dbReference type="Pfam" id="PF00009">
    <property type="entry name" value="GTP_EFTU"/>
    <property type="match status" value="1"/>
</dbReference>
<dbReference type="Pfam" id="PF03144">
    <property type="entry name" value="GTP_EFTU_D2"/>
    <property type="match status" value="1"/>
</dbReference>
<dbReference type="PRINTS" id="PR00315">
    <property type="entry name" value="ELONGATNFCT"/>
</dbReference>
<dbReference type="SMART" id="SM00838">
    <property type="entry name" value="EFG_C"/>
    <property type="match status" value="1"/>
</dbReference>
<dbReference type="SMART" id="SM00889">
    <property type="entry name" value="EFG_IV"/>
    <property type="match status" value="1"/>
</dbReference>
<dbReference type="SUPFAM" id="SSF54980">
    <property type="entry name" value="EF-G C-terminal domain-like"/>
    <property type="match status" value="2"/>
</dbReference>
<dbReference type="SUPFAM" id="SSF52540">
    <property type="entry name" value="P-loop containing nucleoside triphosphate hydrolases"/>
    <property type="match status" value="1"/>
</dbReference>
<dbReference type="SUPFAM" id="SSF54211">
    <property type="entry name" value="Ribosomal protein S5 domain 2-like"/>
    <property type="match status" value="1"/>
</dbReference>
<dbReference type="SUPFAM" id="SSF50447">
    <property type="entry name" value="Translation proteins"/>
    <property type="match status" value="1"/>
</dbReference>
<dbReference type="PROSITE" id="PS51722">
    <property type="entry name" value="G_TR_2"/>
    <property type="match status" value="1"/>
</dbReference>
<feature type="chain" id="PRO_0000225228" description="Elongation factor G 2">
    <location>
        <begin position="1"/>
        <end position="694"/>
    </location>
</feature>
<feature type="domain" description="tr-type G">
    <location>
        <begin position="5"/>
        <end position="280"/>
    </location>
</feature>
<feature type="binding site" evidence="1">
    <location>
        <begin position="14"/>
        <end position="21"/>
    </location>
    <ligand>
        <name>GTP</name>
        <dbReference type="ChEBI" id="CHEBI:37565"/>
    </ligand>
</feature>
<feature type="binding site" evidence="1">
    <location>
        <begin position="78"/>
        <end position="82"/>
    </location>
    <ligand>
        <name>GTP</name>
        <dbReference type="ChEBI" id="CHEBI:37565"/>
    </ligand>
</feature>
<feature type="binding site" evidence="1">
    <location>
        <begin position="132"/>
        <end position="135"/>
    </location>
    <ligand>
        <name>GTP</name>
        <dbReference type="ChEBI" id="CHEBI:37565"/>
    </ligand>
</feature>
<evidence type="ECO:0000255" key="1">
    <source>
        <dbReference type="HAMAP-Rule" id="MF_00054"/>
    </source>
</evidence>
<keyword id="KW-0963">Cytoplasm</keyword>
<keyword id="KW-0251">Elongation factor</keyword>
<keyword id="KW-0342">GTP-binding</keyword>
<keyword id="KW-0547">Nucleotide-binding</keyword>
<keyword id="KW-0648">Protein biosynthesis</keyword>
<keyword id="KW-1185">Reference proteome</keyword>
<proteinExistence type="inferred from homology"/>
<accession>Q3IJW9</accession>